<sequence length="423" mass="47347">MAQLQARFYSENKKYAVDDVPFSIPAAAEVADLSNIINKLLETKNELHKHVEFDFLIKGQFLRVPLVKHMELENISSEEVVELEYVEKYTAPQPEQCMFHDDWISSIEGAEEWILSGSYDKTSRIWSLEGKSIMTIVGHTDVVKDVAWVKKDSLSCLLLTASMDQTVLLWEWNVEKNKVKALHCCRGHAGSVDAIAVDSSGAKFCSGSWDKMLKIWSTVPTDEEDEMEEATNRPRKKQKTEQLGLTRTPLVTLSGHTEAISSVLWSDAEEICSASWDHTIRVWDVESGGLKSTLTGNKVFNCISYSPLCKRLASGSTDRHIRLWDPRTKDGSLVSLSLTSHTGWVTSVKWSPTHEQQLISGSLDNIVKLWDTRSCKAPLYDLAAHEDKVLSVDWTDTGLLLSGGADNKLYSYSYSPTTSHVGA</sequence>
<evidence type="ECO:0000250" key="1"/>
<evidence type="ECO:0000250" key="2">
    <source>
        <dbReference type="UniProtKB" id="Q9GZL7"/>
    </source>
</evidence>
<evidence type="ECO:0000255" key="3">
    <source>
        <dbReference type="HAMAP-Rule" id="MF_03029"/>
    </source>
</evidence>
<evidence type="ECO:0000305" key="4"/>
<gene>
    <name type="primary">Wdr12</name>
    <name type="ORF">MNCb-5414</name>
</gene>
<proteinExistence type="evidence at protein level"/>
<feature type="initiator methionine" description="Removed" evidence="2">
    <location>
        <position position="1"/>
    </location>
</feature>
<feature type="chain" id="PRO_0000051359" description="Ribosome biogenesis protein WDR12">
    <location>
        <begin position="2"/>
        <end position="423"/>
    </location>
</feature>
<feature type="repeat" description="WD 1">
    <location>
        <begin position="99"/>
        <end position="137"/>
    </location>
</feature>
<feature type="repeat" description="WD 2">
    <location>
        <begin position="138"/>
        <end position="180"/>
    </location>
</feature>
<feature type="repeat" description="WD 3">
    <location>
        <begin position="187"/>
        <end position="226"/>
    </location>
</feature>
<feature type="repeat" description="WD 4">
    <location>
        <begin position="255"/>
        <end position="293"/>
    </location>
</feature>
<feature type="repeat" description="WD 5">
    <location>
        <begin position="295"/>
        <end position="334"/>
    </location>
</feature>
<feature type="repeat" description="WD 6">
    <location>
        <begin position="340"/>
        <end position="380"/>
    </location>
</feature>
<feature type="repeat" description="WD 7">
    <location>
        <begin position="384"/>
        <end position="422"/>
    </location>
</feature>
<feature type="region of interest" description="Ubiquitin-like (UBL) domain" evidence="3">
    <location>
        <begin position="4"/>
        <end position="87"/>
    </location>
</feature>
<feature type="region of interest" description="Sufficient for nucleolar localization" evidence="1">
    <location>
        <begin position="98"/>
        <end position="423"/>
    </location>
</feature>
<feature type="modified residue" description="N-acetylalanine" evidence="2">
    <location>
        <position position="2"/>
    </location>
</feature>
<feature type="modified residue" description="Phosphoserine" evidence="2">
    <location>
        <position position="415"/>
    </location>
</feature>
<feature type="cross-link" description="Glycyl lysine isopeptide (Lys-Gly) (interchain with G-Cter in SUMO1)" evidence="2">
    <location>
        <position position="239"/>
    </location>
</feature>
<feature type="sequence conflict" description="In Ref. 2; AAF44683." evidence="4" ref="2">
    <original>F</original>
    <variation>S</variation>
    <location>
        <position position="99"/>
    </location>
</feature>
<feature type="sequence conflict" description="In Ref. 1; AAL29680/AAL29681." evidence="4" ref="1">
    <original>T</original>
    <variation>A</variation>
    <location>
        <position position="418"/>
    </location>
</feature>
<protein>
    <recommendedName>
        <fullName evidence="3">Ribosome biogenesis protein WDR12</fullName>
    </recommendedName>
    <alternativeName>
        <fullName evidence="3">WD repeat-containing protein 12</fullName>
    </alternativeName>
</protein>
<dbReference type="EMBL" id="AY059431">
    <property type="protein sequence ID" value="AAL29680.1"/>
    <property type="molecule type" value="mRNA"/>
</dbReference>
<dbReference type="EMBL" id="AY059432">
    <property type="protein sequence ID" value="AAL29681.1"/>
    <property type="molecule type" value="mRNA"/>
</dbReference>
<dbReference type="EMBL" id="AF239765">
    <property type="protein sequence ID" value="AAF44683.1"/>
    <property type="molecule type" value="mRNA"/>
</dbReference>
<dbReference type="EMBL" id="AB041608">
    <property type="protein sequence ID" value="BAA95091.1"/>
    <property type="molecule type" value="mRNA"/>
</dbReference>
<dbReference type="EMBL" id="AK007500">
    <property type="protein sequence ID" value="BAB25072.1"/>
    <property type="molecule type" value="mRNA"/>
</dbReference>
<dbReference type="EMBL" id="AK012022">
    <property type="protein sequence ID" value="BAB27979.3"/>
    <property type="molecule type" value="mRNA"/>
</dbReference>
<dbReference type="EMBL" id="AK016611">
    <property type="protein sequence ID" value="BAB30336.1"/>
    <property type="molecule type" value="mRNA"/>
</dbReference>
<dbReference type="EMBL" id="AK031436">
    <property type="protein sequence ID" value="BAC27402.1"/>
    <property type="molecule type" value="mRNA"/>
</dbReference>
<dbReference type="EMBL" id="BC004748">
    <property type="protein sequence ID" value="AAH04748.1"/>
    <property type="molecule type" value="mRNA"/>
</dbReference>
<dbReference type="EMBL" id="BC052386">
    <property type="protein sequence ID" value="AAH52386.1"/>
    <property type="molecule type" value="mRNA"/>
</dbReference>
<dbReference type="CCDS" id="CCDS14988.1"/>
<dbReference type="RefSeq" id="NP_001185989.1">
    <property type="nucleotide sequence ID" value="NM_001199060.1"/>
</dbReference>
<dbReference type="RefSeq" id="NP_001185990.1">
    <property type="nucleotide sequence ID" value="NM_001199061.1"/>
</dbReference>
<dbReference type="RefSeq" id="NP_067287.1">
    <property type="nucleotide sequence ID" value="NM_021312.5"/>
</dbReference>
<dbReference type="RefSeq" id="XP_011236865.1">
    <property type="nucleotide sequence ID" value="XM_011238563.4"/>
</dbReference>
<dbReference type="RefSeq" id="XP_017177350.1">
    <property type="nucleotide sequence ID" value="XM_017321861.2"/>
</dbReference>
<dbReference type="RefSeq" id="XP_030111553.1">
    <property type="nucleotide sequence ID" value="XM_030255693.1"/>
</dbReference>
<dbReference type="SMR" id="Q9JJA4"/>
<dbReference type="BioGRID" id="208312">
    <property type="interactions" value="27"/>
</dbReference>
<dbReference type="CORUM" id="Q9JJA4"/>
<dbReference type="FunCoup" id="Q9JJA4">
    <property type="interactions" value="2785"/>
</dbReference>
<dbReference type="STRING" id="10090.ENSMUSP00000027173"/>
<dbReference type="GlyGen" id="Q9JJA4">
    <property type="glycosylation" value="1 site, 1 O-linked glycan (1 site)"/>
</dbReference>
<dbReference type="iPTMnet" id="Q9JJA4"/>
<dbReference type="PhosphoSitePlus" id="Q9JJA4"/>
<dbReference type="PaxDb" id="10090-ENSMUSP00000027173"/>
<dbReference type="ProteomicsDB" id="297635"/>
<dbReference type="Pumba" id="Q9JJA4"/>
<dbReference type="Antibodypedia" id="19949">
    <property type="antibodies" value="163 antibodies from 26 providers"/>
</dbReference>
<dbReference type="DNASU" id="57750"/>
<dbReference type="Ensembl" id="ENSMUST00000027173.15">
    <property type="protein sequence ID" value="ENSMUSP00000027173.9"/>
    <property type="gene ID" value="ENSMUSG00000026019.16"/>
</dbReference>
<dbReference type="Ensembl" id="ENSMUST00000117438.8">
    <property type="protein sequence ID" value="ENSMUSP00000113494.2"/>
    <property type="gene ID" value="ENSMUSG00000026019.16"/>
</dbReference>
<dbReference type="Ensembl" id="ENSMUST00000122038.8">
    <property type="protein sequence ID" value="ENSMUSP00000113148.2"/>
    <property type="gene ID" value="ENSMUSG00000026019.16"/>
</dbReference>
<dbReference type="GeneID" id="57750"/>
<dbReference type="KEGG" id="mmu:57750"/>
<dbReference type="UCSC" id="uc007bee.2">
    <property type="organism name" value="mouse"/>
</dbReference>
<dbReference type="AGR" id="MGI:1927241"/>
<dbReference type="CTD" id="55759"/>
<dbReference type="MGI" id="MGI:1927241">
    <property type="gene designation" value="Wdr12"/>
</dbReference>
<dbReference type="VEuPathDB" id="HostDB:ENSMUSG00000026019"/>
<dbReference type="eggNOG" id="KOG0313">
    <property type="taxonomic scope" value="Eukaryota"/>
</dbReference>
<dbReference type="GeneTree" id="ENSGT00930000150950"/>
<dbReference type="HOGENOM" id="CLU_000288_57_0_1"/>
<dbReference type="InParanoid" id="Q9JJA4"/>
<dbReference type="OMA" id="DHKYVEF"/>
<dbReference type="OrthoDB" id="10251381at2759"/>
<dbReference type="PhylomeDB" id="Q9JJA4"/>
<dbReference type="TreeFam" id="TF313023"/>
<dbReference type="Reactome" id="R-MMU-6791226">
    <property type="pathway name" value="Major pathway of rRNA processing in the nucleolus and cytosol"/>
</dbReference>
<dbReference type="BioGRID-ORCS" id="57750">
    <property type="hits" value="25 hits in 79 CRISPR screens"/>
</dbReference>
<dbReference type="ChiTaRS" id="Wdr12">
    <property type="organism name" value="mouse"/>
</dbReference>
<dbReference type="PRO" id="PR:Q9JJA4"/>
<dbReference type="Proteomes" id="UP000000589">
    <property type="component" value="Chromosome 1"/>
</dbReference>
<dbReference type="RNAct" id="Q9JJA4">
    <property type="molecule type" value="protein"/>
</dbReference>
<dbReference type="Bgee" id="ENSMUSG00000026019">
    <property type="expression patterns" value="Expressed in spermatid and 245 other cell types or tissues"/>
</dbReference>
<dbReference type="ExpressionAtlas" id="Q9JJA4">
    <property type="expression patterns" value="baseline and differential"/>
</dbReference>
<dbReference type="GO" id="GO:0005730">
    <property type="term" value="C:nucleolus"/>
    <property type="evidence" value="ECO:0000250"/>
    <property type="project" value="UniProtKB"/>
</dbReference>
<dbReference type="GO" id="GO:0005654">
    <property type="term" value="C:nucleoplasm"/>
    <property type="evidence" value="ECO:0000250"/>
    <property type="project" value="UniProtKB"/>
</dbReference>
<dbReference type="GO" id="GO:0005634">
    <property type="term" value="C:nucleus"/>
    <property type="evidence" value="ECO:0000314"/>
    <property type="project" value="MGI"/>
</dbReference>
<dbReference type="GO" id="GO:0070545">
    <property type="term" value="C:PeBoW complex"/>
    <property type="evidence" value="ECO:0000250"/>
    <property type="project" value="UniProtKB"/>
</dbReference>
<dbReference type="GO" id="GO:0030687">
    <property type="term" value="C:preribosome, large subunit precursor"/>
    <property type="evidence" value="ECO:0000250"/>
    <property type="project" value="UniProtKB"/>
</dbReference>
<dbReference type="GO" id="GO:0043021">
    <property type="term" value="F:ribonucleoprotein complex binding"/>
    <property type="evidence" value="ECO:0007669"/>
    <property type="project" value="UniProtKB-UniRule"/>
</dbReference>
<dbReference type="GO" id="GO:0000466">
    <property type="term" value="P:maturation of 5.8S rRNA from tricistronic rRNA transcript (SSU-rRNA, 5.8S rRNA, LSU-rRNA)"/>
    <property type="evidence" value="ECO:0000250"/>
    <property type="project" value="UniProtKB"/>
</dbReference>
<dbReference type="GO" id="GO:0000463">
    <property type="term" value="P:maturation of LSU-rRNA from tricistronic rRNA transcript (SSU-rRNA, 5.8S rRNA, LSU-rRNA)"/>
    <property type="evidence" value="ECO:0000250"/>
    <property type="project" value="UniProtKB"/>
</dbReference>
<dbReference type="GO" id="GO:0007219">
    <property type="term" value="P:Notch signaling pathway"/>
    <property type="evidence" value="ECO:0000353"/>
    <property type="project" value="MGI"/>
</dbReference>
<dbReference type="GO" id="GO:0051726">
    <property type="term" value="P:regulation of cell cycle"/>
    <property type="evidence" value="ECO:0000250"/>
    <property type="project" value="UniProtKB"/>
</dbReference>
<dbReference type="CDD" id="cd00200">
    <property type="entry name" value="WD40"/>
    <property type="match status" value="1"/>
</dbReference>
<dbReference type="FunFam" id="2.130.10.10:FF:000272">
    <property type="entry name" value="Ribosome biogenesis protein WDR12"/>
    <property type="match status" value="1"/>
</dbReference>
<dbReference type="Gene3D" id="2.130.10.10">
    <property type="entry name" value="YVTN repeat-like/Quinoprotein amine dehydrogenase"/>
    <property type="match status" value="1"/>
</dbReference>
<dbReference type="HAMAP" id="MF_03029">
    <property type="entry name" value="WDR12"/>
    <property type="match status" value="1"/>
</dbReference>
<dbReference type="InterPro" id="IPR020472">
    <property type="entry name" value="G-protein_beta_WD-40_rep"/>
</dbReference>
<dbReference type="InterPro" id="IPR012972">
    <property type="entry name" value="NLE"/>
</dbReference>
<dbReference type="InterPro" id="IPR015943">
    <property type="entry name" value="WD40/YVTN_repeat-like_dom_sf"/>
</dbReference>
<dbReference type="InterPro" id="IPR019775">
    <property type="entry name" value="WD40_repeat_CS"/>
</dbReference>
<dbReference type="InterPro" id="IPR036322">
    <property type="entry name" value="WD40_repeat_dom_sf"/>
</dbReference>
<dbReference type="InterPro" id="IPR001680">
    <property type="entry name" value="WD40_rpt"/>
</dbReference>
<dbReference type="InterPro" id="IPR028599">
    <property type="entry name" value="WDR12/Ytm1"/>
</dbReference>
<dbReference type="PANTHER" id="PTHR19855:SF11">
    <property type="entry name" value="RIBOSOME BIOGENESIS PROTEIN WDR12"/>
    <property type="match status" value="1"/>
</dbReference>
<dbReference type="PANTHER" id="PTHR19855">
    <property type="entry name" value="WD40 REPEAT PROTEIN 12, 37"/>
    <property type="match status" value="1"/>
</dbReference>
<dbReference type="Pfam" id="PF08154">
    <property type="entry name" value="NLE"/>
    <property type="match status" value="1"/>
</dbReference>
<dbReference type="Pfam" id="PF00400">
    <property type="entry name" value="WD40"/>
    <property type="match status" value="7"/>
</dbReference>
<dbReference type="PRINTS" id="PR00320">
    <property type="entry name" value="GPROTEINBRPT"/>
</dbReference>
<dbReference type="SMART" id="SM00320">
    <property type="entry name" value="WD40"/>
    <property type="match status" value="7"/>
</dbReference>
<dbReference type="SUPFAM" id="SSF50978">
    <property type="entry name" value="WD40 repeat-like"/>
    <property type="match status" value="1"/>
</dbReference>
<dbReference type="PROSITE" id="PS00678">
    <property type="entry name" value="WD_REPEATS_1"/>
    <property type="match status" value="2"/>
</dbReference>
<dbReference type="PROSITE" id="PS50082">
    <property type="entry name" value="WD_REPEATS_2"/>
    <property type="match status" value="5"/>
</dbReference>
<dbReference type="PROSITE" id="PS50294">
    <property type="entry name" value="WD_REPEATS_REGION"/>
    <property type="match status" value="1"/>
</dbReference>
<keyword id="KW-0007">Acetylation</keyword>
<keyword id="KW-1017">Isopeptide bond</keyword>
<keyword id="KW-0539">Nucleus</keyword>
<keyword id="KW-0597">Phosphoprotein</keyword>
<keyword id="KW-1185">Reference proteome</keyword>
<keyword id="KW-0677">Repeat</keyword>
<keyword id="KW-0690">Ribosome biogenesis</keyword>
<keyword id="KW-0698">rRNA processing</keyword>
<keyword id="KW-0832">Ubl conjugation</keyword>
<keyword id="KW-0853">WD repeat</keyword>
<organism>
    <name type="scientific">Mus musculus</name>
    <name type="common">Mouse</name>
    <dbReference type="NCBI Taxonomy" id="10090"/>
    <lineage>
        <taxon>Eukaryota</taxon>
        <taxon>Metazoa</taxon>
        <taxon>Chordata</taxon>
        <taxon>Craniata</taxon>
        <taxon>Vertebrata</taxon>
        <taxon>Euteleostomi</taxon>
        <taxon>Mammalia</taxon>
        <taxon>Eutheria</taxon>
        <taxon>Euarchontoglires</taxon>
        <taxon>Glires</taxon>
        <taxon>Rodentia</taxon>
        <taxon>Myomorpha</taxon>
        <taxon>Muroidea</taxon>
        <taxon>Muridae</taxon>
        <taxon>Murinae</taxon>
        <taxon>Mus</taxon>
        <taxon>Mus</taxon>
    </lineage>
</organism>
<comment type="function">
    <text evidence="3">Component of the PeBoW complex, which is required for maturation of 28S and 5.8S ribosomal RNAs and formation of the 60S ribosome.</text>
</comment>
<comment type="subunit">
    <text evidence="3">Component of the PeBoW complex, composed of BOP1, PES1 and WDR12. The complex is held together by BOP1, which interacts with PES1 via its N-terminal domain and with WDR12 via a high-affinity interaction between the seven-bladed beta-propeller domains of the 2 proteins. The PeBoW complex associates with the 66S pre-ribosome. Interacts (via UBL domain) with MDN1 (via VWFA/MIDAS domain).</text>
</comment>
<comment type="subcellular location">
    <subcellularLocation>
        <location evidence="3">Nucleus</location>
        <location evidence="3">Nucleolus</location>
    </subcellularLocation>
    <subcellularLocation>
        <location evidence="3">Nucleus</location>
        <location evidence="3">Nucleoplasm</location>
    </subcellularLocation>
</comment>
<comment type="similarity">
    <text evidence="3">Belongs to the WD repeat WDR12/YTM1 family.</text>
</comment>
<reference key="1">
    <citation type="journal article" date="2002" name="Genomics">
        <title>Wdr12, a mouse gene encoding a novel WD-repeat protein with a notchless-like amino-terminal domain.</title>
        <authorList>
            <person name="Nal B."/>
            <person name="Mohr E."/>
            <person name="Da Silva M.I."/>
            <person name="Tagett R."/>
            <person name="Navarro C."/>
            <person name="Carroll P."/>
            <person name="Depetris D."/>
            <person name="Verthuy C."/>
            <person name="Jordan B.R."/>
            <person name="Ferrier P."/>
        </authorList>
    </citation>
    <scope>NUCLEOTIDE SEQUENCE [MRNA]</scope>
    <source>
        <tissue>Thymocyte</tissue>
        <tissue>Thymus</tissue>
    </source>
</reference>
<reference key="2">
    <citation type="submission" date="2000-02" db="EMBL/GenBank/DDBJ databases">
        <title>Mouse homologue of Saccharomyces cervisiae YTM1.</title>
        <authorList>
            <person name="Matsumoto S."/>
        </authorList>
    </citation>
    <scope>NUCLEOTIDE SEQUENCE [MRNA]</scope>
    <source>
        <strain>C57BL/6J X 129/SvJ</strain>
        <tissue>Embryo</tissue>
    </source>
</reference>
<reference key="3">
    <citation type="submission" date="2000-04" db="EMBL/GenBank/DDBJ databases">
        <title>Isolation of full-length cDNA clones from mouse brain cDNA library made by oligo-capping method.</title>
        <authorList>
            <person name="Osada N."/>
            <person name="Kusuda J."/>
            <person name="Tanuma R."/>
            <person name="Ito A."/>
            <person name="Hirata M."/>
            <person name="Sugano S."/>
            <person name="Hashimoto K."/>
        </authorList>
    </citation>
    <scope>NUCLEOTIDE SEQUENCE [LARGE SCALE MRNA]</scope>
    <source>
        <strain>C57BL/6J</strain>
        <tissue>Brain</tissue>
    </source>
</reference>
<reference key="4">
    <citation type="journal article" date="2005" name="Science">
        <title>The transcriptional landscape of the mammalian genome.</title>
        <authorList>
            <person name="Carninci P."/>
            <person name="Kasukawa T."/>
            <person name="Katayama S."/>
            <person name="Gough J."/>
            <person name="Frith M.C."/>
            <person name="Maeda N."/>
            <person name="Oyama R."/>
            <person name="Ravasi T."/>
            <person name="Lenhard B."/>
            <person name="Wells C."/>
            <person name="Kodzius R."/>
            <person name="Shimokawa K."/>
            <person name="Bajic V.B."/>
            <person name="Brenner S.E."/>
            <person name="Batalov S."/>
            <person name="Forrest A.R."/>
            <person name="Zavolan M."/>
            <person name="Davis M.J."/>
            <person name="Wilming L.G."/>
            <person name="Aidinis V."/>
            <person name="Allen J.E."/>
            <person name="Ambesi-Impiombato A."/>
            <person name="Apweiler R."/>
            <person name="Aturaliya R.N."/>
            <person name="Bailey T.L."/>
            <person name="Bansal M."/>
            <person name="Baxter L."/>
            <person name="Beisel K.W."/>
            <person name="Bersano T."/>
            <person name="Bono H."/>
            <person name="Chalk A.M."/>
            <person name="Chiu K.P."/>
            <person name="Choudhary V."/>
            <person name="Christoffels A."/>
            <person name="Clutterbuck D.R."/>
            <person name="Crowe M.L."/>
            <person name="Dalla E."/>
            <person name="Dalrymple B.P."/>
            <person name="de Bono B."/>
            <person name="Della Gatta G."/>
            <person name="di Bernardo D."/>
            <person name="Down T."/>
            <person name="Engstrom P."/>
            <person name="Fagiolini M."/>
            <person name="Faulkner G."/>
            <person name="Fletcher C.F."/>
            <person name="Fukushima T."/>
            <person name="Furuno M."/>
            <person name="Futaki S."/>
            <person name="Gariboldi M."/>
            <person name="Georgii-Hemming P."/>
            <person name="Gingeras T.R."/>
            <person name="Gojobori T."/>
            <person name="Green R.E."/>
            <person name="Gustincich S."/>
            <person name="Harbers M."/>
            <person name="Hayashi Y."/>
            <person name="Hensch T.K."/>
            <person name="Hirokawa N."/>
            <person name="Hill D."/>
            <person name="Huminiecki L."/>
            <person name="Iacono M."/>
            <person name="Ikeo K."/>
            <person name="Iwama A."/>
            <person name="Ishikawa T."/>
            <person name="Jakt M."/>
            <person name="Kanapin A."/>
            <person name="Katoh M."/>
            <person name="Kawasawa Y."/>
            <person name="Kelso J."/>
            <person name="Kitamura H."/>
            <person name="Kitano H."/>
            <person name="Kollias G."/>
            <person name="Krishnan S.P."/>
            <person name="Kruger A."/>
            <person name="Kummerfeld S.K."/>
            <person name="Kurochkin I.V."/>
            <person name="Lareau L.F."/>
            <person name="Lazarevic D."/>
            <person name="Lipovich L."/>
            <person name="Liu J."/>
            <person name="Liuni S."/>
            <person name="McWilliam S."/>
            <person name="Madan Babu M."/>
            <person name="Madera M."/>
            <person name="Marchionni L."/>
            <person name="Matsuda H."/>
            <person name="Matsuzawa S."/>
            <person name="Miki H."/>
            <person name="Mignone F."/>
            <person name="Miyake S."/>
            <person name="Morris K."/>
            <person name="Mottagui-Tabar S."/>
            <person name="Mulder N."/>
            <person name="Nakano N."/>
            <person name="Nakauchi H."/>
            <person name="Ng P."/>
            <person name="Nilsson R."/>
            <person name="Nishiguchi S."/>
            <person name="Nishikawa S."/>
            <person name="Nori F."/>
            <person name="Ohara O."/>
            <person name="Okazaki Y."/>
            <person name="Orlando V."/>
            <person name="Pang K.C."/>
            <person name="Pavan W.J."/>
            <person name="Pavesi G."/>
            <person name="Pesole G."/>
            <person name="Petrovsky N."/>
            <person name="Piazza S."/>
            <person name="Reed J."/>
            <person name="Reid J.F."/>
            <person name="Ring B.Z."/>
            <person name="Ringwald M."/>
            <person name="Rost B."/>
            <person name="Ruan Y."/>
            <person name="Salzberg S.L."/>
            <person name="Sandelin A."/>
            <person name="Schneider C."/>
            <person name="Schoenbach C."/>
            <person name="Sekiguchi K."/>
            <person name="Semple C.A."/>
            <person name="Seno S."/>
            <person name="Sessa L."/>
            <person name="Sheng Y."/>
            <person name="Shibata Y."/>
            <person name="Shimada H."/>
            <person name="Shimada K."/>
            <person name="Silva D."/>
            <person name="Sinclair B."/>
            <person name="Sperling S."/>
            <person name="Stupka E."/>
            <person name="Sugiura K."/>
            <person name="Sultana R."/>
            <person name="Takenaka Y."/>
            <person name="Taki K."/>
            <person name="Tammoja K."/>
            <person name="Tan S.L."/>
            <person name="Tang S."/>
            <person name="Taylor M.S."/>
            <person name="Tegner J."/>
            <person name="Teichmann S.A."/>
            <person name="Ueda H.R."/>
            <person name="van Nimwegen E."/>
            <person name="Verardo R."/>
            <person name="Wei C.L."/>
            <person name="Yagi K."/>
            <person name="Yamanishi H."/>
            <person name="Zabarovsky E."/>
            <person name="Zhu S."/>
            <person name="Zimmer A."/>
            <person name="Hide W."/>
            <person name="Bult C."/>
            <person name="Grimmond S.M."/>
            <person name="Teasdale R.D."/>
            <person name="Liu E.T."/>
            <person name="Brusic V."/>
            <person name="Quackenbush J."/>
            <person name="Wahlestedt C."/>
            <person name="Mattick J.S."/>
            <person name="Hume D.A."/>
            <person name="Kai C."/>
            <person name="Sasaki D."/>
            <person name="Tomaru Y."/>
            <person name="Fukuda S."/>
            <person name="Kanamori-Katayama M."/>
            <person name="Suzuki M."/>
            <person name="Aoki J."/>
            <person name="Arakawa T."/>
            <person name="Iida J."/>
            <person name="Imamura K."/>
            <person name="Itoh M."/>
            <person name="Kato T."/>
            <person name="Kawaji H."/>
            <person name="Kawagashira N."/>
            <person name="Kawashima T."/>
            <person name="Kojima M."/>
            <person name="Kondo S."/>
            <person name="Konno H."/>
            <person name="Nakano K."/>
            <person name="Ninomiya N."/>
            <person name="Nishio T."/>
            <person name="Okada M."/>
            <person name="Plessy C."/>
            <person name="Shibata K."/>
            <person name="Shiraki T."/>
            <person name="Suzuki S."/>
            <person name="Tagami M."/>
            <person name="Waki K."/>
            <person name="Watahiki A."/>
            <person name="Okamura-Oho Y."/>
            <person name="Suzuki H."/>
            <person name="Kawai J."/>
            <person name="Hayashizaki Y."/>
        </authorList>
    </citation>
    <scope>NUCLEOTIDE SEQUENCE [LARGE SCALE MRNA]</scope>
    <source>
        <strain>C57BL/6J</strain>
        <tissue>Embryo</tissue>
        <tissue>Pancreas</tissue>
        <tissue>Testis</tissue>
    </source>
</reference>
<reference key="5">
    <citation type="journal article" date="2004" name="Genome Res.">
        <title>The status, quality, and expansion of the NIH full-length cDNA project: the Mammalian Gene Collection (MGC).</title>
        <authorList>
            <consortium name="The MGC Project Team"/>
        </authorList>
    </citation>
    <scope>NUCLEOTIDE SEQUENCE [LARGE SCALE MRNA]</scope>
    <source>
        <strain>C57BL/6J</strain>
        <strain>FVB/N</strain>
        <tissue>Brain</tissue>
        <tissue>Mammary gland</tissue>
    </source>
</reference>
<reference key="6">
    <citation type="journal article" date="2010" name="Cell">
        <title>A tissue-specific atlas of mouse protein phosphorylation and expression.</title>
        <authorList>
            <person name="Huttlin E.L."/>
            <person name="Jedrychowski M.P."/>
            <person name="Elias J.E."/>
            <person name="Goswami T."/>
            <person name="Rad R."/>
            <person name="Beausoleil S.A."/>
            <person name="Villen J."/>
            <person name="Haas W."/>
            <person name="Sowa M.E."/>
            <person name="Gygi S.P."/>
        </authorList>
    </citation>
    <scope>IDENTIFICATION BY MASS SPECTROMETRY [LARGE SCALE ANALYSIS]</scope>
    <source>
        <tissue>Lung</tissue>
        <tissue>Spleen</tissue>
        <tissue>Testis</tissue>
    </source>
</reference>
<accession>Q9JJA4</accession>
<accession>Q9CST3</accession>
<accession>Q9JKF5</accession>
<name>WDR12_MOUSE</name>